<gene>
    <name evidence="2" type="primary">hb</name>
</gene>
<feature type="chain" id="PRO_0000046965" description="Protein hunchback">
    <location>
        <begin position="1"/>
        <end position="816"/>
    </location>
</feature>
<feature type="zinc finger region" description="C2H2-type 1" evidence="3">
    <location>
        <begin position="261"/>
        <end position="283"/>
    </location>
</feature>
<feature type="zinc finger region" description="C2H2-type 2" evidence="3">
    <location>
        <begin position="290"/>
        <end position="312"/>
    </location>
</feature>
<feature type="zinc finger region" description="C2H2-type 3" evidence="3">
    <location>
        <begin position="318"/>
        <end position="340"/>
    </location>
</feature>
<feature type="zinc finger region" description="C2H2-type 4" evidence="3">
    <location>
        <begin position="346"/>
        <end position="364"/>
    </location>
</feature>
<feature type="zinc finger region" description="C2H2-type 5" evidence="3">
    <location>
        <begin position="763"/>
        <end position="785"/>
    </location>
</feature>
<feature type="zinc finger region" description="C2H2-type 6" evidence="3">
    <location>
        <begin position="791"/>
        <end position="815"/>
    </location>
</feature>
<feature type="region of interest" description="Disordered" evidence="4">
    <location>
        <begin position="33"/>
        <end position="92"/>
    </location>
</feature>
<feature type="region of interest" description="Disordered" evidence="4">
    <location>
        <begin position="129"/>
        <end position="151"/>
    </location>
</feature>
<feature type="region of interest" description="Disordered" evidence="4">
    <location>
        <begin position="165"/>
        <end position="185"/>
    </location>
</feature>
<feature type="region of interest" description="Disordered" evidence="4">
    <location>
        <begin position="197"/>
        <end position="229"/>
    </location>
</feature>
<feature type="region of interest" description="Disordered" evidence="4">
    <location>
        <begin position="387"/>
        <end position="427"/>
    </location>
</feature>
<feature type="region of interest" description="Disordered" evidence="4">
    <location>
        <begin position="536"/>
        <end position="612"/>
    </location>
</feature>
<feature type="region of interest" description="Disordered" evidence="4">
    <location>
        <begin position="679"/>
        <end position="734"/>
    </location>
</feature>
<feature type="compositionally biased region" description="Low complexity" evidence="4">
    <location>
        <begin position="49"/>
        <end position="60"/>
    </location>
</feature>
<feature type="compositionally biased region" description="Low complexity" evidence="4">
    <location>
        <begin position="79"/>
        <end position="89"/>
    </location>
</feature>
<feature type="compositionally biased region" description="Low complexity" evidence="4">
    <location>
        <begin position="129"/>
        <end position="139"/>
    </location>
</feature>
<feature type="compositionally biased region" description="Basic and acidic residues" evidence="4">
    <location>
        <begin position="219"/>
        <end position="229"/>
    </location>
</feature>
<feature type="compositionally biased region" description="Low complexity" evidence="4">
    <location>
        <begin position="399"/>
        <end position="427"/>
    </location>
</feature>
<feature type="compositionally biased region" description="Low complexity" evidence="4">
    <location>
        <begin position="536"/>
        <end position="560"/>
    </location>
</feature>
<feature type="compositionally biased region" description="Acidic residues" evidence="4">
    <location>
        <begin position="567"/>
        <end position="578"/>
    </location>
</feature>
<feature type="compositionally biased region" description="Low complexity" evidence="4">
    <location>
        <begin position="712"/>
        <end position="734"/>
    </location>
</feature>
<feature type="modified residue" description="Phosphothreonine" evidence="2">
    <location>
        <position position="199"/>
    </location>
</feature>
<feature type="modified residue" description="Phosphoserine" evidence="2">
    <location>
        <position position="209"/>
    </location>
</feature>
<feature type="modified residue" description="Phosphoserine" evidence="2">
    <location>
        <position position="228"/>
    </location>
</feature>
<feature type="modified residue" description="Phosphoserine" evidence="2">
    <location>
        <position position="230"/>
    </location>
</feature>
<feature type="modified residue" description="Phosphoserine" evidence="2">
    <location>
        <position position="231"/>
    </location>
</feature>
<feature type="modified residue" description="Phosphoserine" evidence="2">
    <location>
        <position position="584"/>
    </location>
</feature>
<feature type="modified residue" description="Phosphoserine" evidence="2">
    <location>
        <position position="587"/>
    </location>
</feature>
<feature type="sequence conflict" description="In Ref. 1; CAA33419." evidence="5" ref="1">
    <original>R</original>
    <variation>A</variation>
    <location>
        <position position="533"/>
    </location>
</feature>
<dbReference type="EMBL" id="X15359">
    <property type="protein sequence ID" value="CAA33419.1"/>
    <property type="molecule type" value="Genomic_DNA"/>
</dbReference>
<dbReference type="EMBL" id="CH940650">
    <property type="protein sequence ID" value="EDW68204.1"/>
    <property type="molecule type" value="Genomic_DNA"/>
</dbReference>
<dbReference type="PIR" id="S05548">
    <property type="entry name" value="S05548"/>
</dbReference>
<dbReference type="RefSeq" id="XP_002054684.1">
    <property type="nucleotide sequence ID" value="XM_002054648.4"/>
</dbReference>
<dbReference type="RefSeq" id="XP_032294939.1">
    <property type="nucleotide sequence ID" value="XM_032439048.2"/>
</dbReference>
<dbReference type="FunCoup" id="P13361">
    <property type="interactions" value="103"/>
</dbReference>
<dbReference type="STRING" id="7244.P13361"/>
<dbReference type="EnsemblMetazoa" id="FBtr0240513">
    <property type="protein sequence ID" value="FBpp0239005"/>
    <property type="gene ID" value="FBgn0013116"/>
</dbReference>
<dbReference type="EnsemblMetazoa" id="XM_002054648.3">
    <property type="protein sequence ID" value="XP_002054684.1"/>
    <property type="gene ID" value="LOC6629267"/>
</dbReference>
<dbReference type="EnsemblMetazoa" id="XM_032439048.1">
    <property type="protein sequence ID" value="XP_032294939.1"/>
    <property type="gene ID" value="LOC6629267"/>
</dbReference>
<dbReference type="GeneID" id="6629267"/>
<dbReference type="KEGG" id="dvi:6629267"/>
<dbReference type="CTD" id="15120"/>
<dbReference type="eggNOG" id="KOG1721">
    <property type="taxonomic scope" value="Eukaryota"/>
</dbReference>
<dbReference type="HOGENOM" id="CLU_021336_0_0_1"/>
<dbReference type="InParanoid" id="P13361"/>
<dbReference type="OMA" id="LPEEHCS"/>
<dbReference type="OrthoDB" id="10015593at2759"/>
<dbReference type="Proteomes" id="UP000008792">
    <property type="component" value="Unassembled WGS sequence"/>
</dbReference>
<dbReference type="GO" id="GO:0005634">
    <property type="term" value="C:nucleus"/>
    <property type="evidence" value="ECO:0007669"/>
    <property type="project" value="UniProtKB-SubCell"/>
</dbReference>
<dbReference type="GO" id="GO:0003700">
    <property type="term" value="F:DNA-binding transcription factor activity"/>
    <property type="evidence" value="ECO:0007669"/>
    <property type="project" value="TreeGrafter"/>
</dbReference>
<dbReference type="GO" id="GO:0000978">
    <property type="term" value="F:RNA polymerase II cis-regulatory region sequence-specific DNA binding"/>
    <property type="evidence" value="ECO:0007669"/>
    <property type="project" value="TreeGrafter"/>
</dbReference>
<dbReference type="GO" id="GO:0008270">
    <property type="term" value="F:zinc ion binding"/>
    <property type="evidence" value="ECO:0007669"/>
    <property type="project" value="UniProtKB-KW"/>
</dbReference>
<dbReference type="GO" id="GO:0006357">
    <property type="term" value="P:regulation of transcription by RNA polymerase II"/>
    <property type="evidence" value="ECO:0007669"/>
    <property type="project" value="TreeGrafter"/>
</dbReference>
<dbReference type="GO" id="GO:0035282">
    <property type="term" value="P:segmentation"/>
    <property type="evidence" value="ECO:0007669"/>
    <property type="project" value="UniProtKB-KW"/>
</dbReference>
<dbReference type="FunFam" id="3.30.160.60:FF:001301">
    <property type="entry name" value="Blast:Protein hunchback"/>
    <property type="match status" value="1"/>
</dbReference>
<dbReference type="FunFam" id="3.30.160.60:FF:001482">
    <property type="entry name" value="Hunchback"/>
    <property type="match status" value="1"/>
</dbReference>
<dbReference type="Gene3D" id="3.30.160.60">
    <property type="entry name" value="Classic Zinc Finger"/>
    <property type="match status" value="3"/>
</dbReference>
<dbReference type="InterPro" id="IPR036236">
    <property type="entry name" value="Znf_C2H2_sf"/>
</dbReference>
<dbReference type="InterPro" id="IPR013087">
    <property type="entry name" value="Znf_C2H2_type"/>
</dbReference>
<dbReference type="PANTHER" id="PTHR24390:SF159">
    <property type="entry name" value="GROWTH FACTOR INDEPENDENT 1 TRANSCRIPTIONAL REPRESSOR"/>
    <property type="match status" value="1"/>
</dbReference>
<dbReference type="PANTHER" id="PTHR24390">
    <property type="entry name" value="ZINC FINGER PROTEIN"/>
    <property type="match status" value="1"/>
</dbReference>
<dbReference type="Pfam" id="PF00096">
    <property type="entry name" value="zf-C2H2"/>
    <property type="match status" value="1"/>
</dbReference>
<dbReference type="SMART" id="SM00355">
    <property type="entry name" value="ZnF_C2H2"/>
    <property type="match status" value="6"/>
</dbReference>
<dbReference type="SUPFAM" id="SSF57667">
    <property type="entry name" value="beta-beta-alpha zinc fingers"/>
    <property type="match status" value="3"/>
</dbReference>
<dbReference type="PROSITE" id="PS00028">
    <property type="entry name" value="ZINC_FINGER_C2H2_1"/>
    <property type="match status" value="3"/>
</dbReference>
<dbReference type="PROSITE" id="PS50157">
    <property type="entry name" value="ZINC_FINGER_C2H2_2"/>
    <property type="match status" value="2"/>
</dbReference>
<proteinExistence type="inferred from homology"/>
<organism>
    <name type="scientific">Drosophila virilis</name>
    <name type="common">Fruit fly</name>
    <dbReference type="NCBI Taxonomy" id="7244"/>
    <lineage>
        <taxon>Eukaryota</taxon>
        <taxon>Metazoa</taxon>
        <taxon>Ecdysozoa</taxon>
        <taxon>Arthropoda</taxon>
        <taxon>Hexapoda</taxon>
        <taxon>Insecta</taxon>
        <taxon>Pterygota</taxon>
        <taxon>Neoptera</taxon>
        <taxon>Endopterygota</taxon>
        <taxon>Diptera</taxon>
        <taxon>Brachycera</taxon>
        <taxon>Muscomorpha</taxon>
        <taxon>Ephydroidea</taxon>
        <taxon>Drosophilidae</taxon>
        <taxon>Drosophila</taxon>
    </lineage>
</organism>
<name>HUNB_DROVI</name>
<keyword id="KW-0217">Developmental protein</keyword>
<keyword id="KW-0238">DNA-binding</keyword>
<keyword id="KW-0302">Gap protein</keyword>
<keyword id="KW-0479">Metal-binding</keyword>
<keyword id="KW-0539">Nucleus</keyword>
<keyword id="KW-0597">Phosphoprotein</keyword>
<keyword id="KW-1185">Reference proteome</keyword>
<keyword id="KW-0677">Repeat</keyword>
<keyword id="KW-0862">Zinc</keyword>
<keyword id="KW-0863">Zinc-finger</keyword>
<evidence type="ECO:0000250" key="1"/>
<evidence type="ECO:0000250" key="2">
    <source>
        <dbReference type="UniProtKB" id="P05084"/>
    </source>
</evidence>
<evidence type="ECO:0000255" key="3">
    <source>
        <dbReference type="PROSITE-ProRule" id="PRU00042"/>
    </source>
</evidence>
<evidence type="ECO:0000256" key="4">
    <source>
        <dbReference type="SAM" id="MobiDB-lite"/>
    </source>
</evidence>
<evidence type="ECO:0000305" key="5"/>
<sequence length="816" mass="89159">MPNWETSTAAPSYEQHNAWYSSMFAANIKQEPLSHHHHHHGQQHHDNHSNSNSGASSPRQSPLPSPIPPSTQLEQYLKQQQQQQQQQQQPMDTLCAAAMTPSPSNNDQNSLQHFDATLQQQLLQQQQYQQHFQAAQHQQQQHHHLALGGFNPLTPPGLPNPMQHYYGGNMRPSPQPTPTAAPTAVAAAIQTGDKLQALTPPMDVTPPKSPAKSQQSSAEPEKEHDLMSNSSEDMKYMAESEDDDSNIRMPIYNSHGKMKNYKCKTCGVVAITKVDFWAHTRTHMKPDKILQCAKCPFVTEFKHHLEYHIRKHKNQKPFQCDKCSYTCVNKSMLNSHRKSHSSVYQYRCADCDYATKYCHSFKLHLRKYGHKPGMVLDEDGTPNPSLVIDVYGTRRGPKSKSFSGSGSSCSSTSKRSNASAAAAQQQQQPVATSQLSAALQGFPMPAAAAGTAAGAAGTAAPAAVAPVSPPSPAKSVASVEQAPSLPSALLPPLASLLQQNRNMAFFPYWNLNLQVLAAQQQAAVLAQLSPRMRDQLQQQQQQQHQQQQQQQQQQQQQQQQLPAHSENEEDEEEEEHEDDFERKSVDSAMDLSQGTPVKEEPQQQQQQQQLPHSNHMAINLKLKDEDTPLISSSSASRRKGRVLKLDTLLQLKSAAMSSPEQQLKLPASVLPTASSPIAGSSANKQLADDPCSGASSADESMETGRVPQVNISASSTASSSGNSSNASSSTSNPTAAATVATSGTVSSSSSSSTTTSSSAPAIYECKYCDIYFKDAVLYTIHMGYHSCDDVFKCNMCGEKCDGPVGLFVHMARNAHS</sequence>
<protein>
    <recommendedName>
        <fullName evidence="2">Protein hunchback</fullName>
    </recommendedName>
</protein>
<comment type="function">
    <text evidence="1">Gap class segmentation protein that controls development of head structures.</text>
</comment>
<comment type="subcellular location">
    <subcellularLocation>
        <location evidence="1">Nucleus</location>
    </subcellularLocation>
</comment>
<comment type="similarity">
    <text evidence="5">Belongs to the hunchback C2H2-type zinc-finger protein family.</text>
</comment>
<reference key="1">
    <citation type="journal article" date="1989" name="EMBO J.">
        <title>Comparison of the gap segmentation gene hunchback between Drosophila melanogaster and Drosophila virilis reveals novel modes of evolutionary change.</title>
        <authorList>
            <person name="Treier M."/>
            <person name="Pfeifle C."/>
            <person name="Tautz D."/>
        </authorList>
    </citation>
    <scope>NUCLEOTIDE SEQUENCE [GENOMIC DNA]</scope>
</reference>
<reference key="2">
    <citation type="journal article" date="1998" name="Mol. Biol. Evol.">
        <title>Microevolutionary divergence pattern of the segmentation gene hunchback in Drosophila.</title>
        <authorList>
            <person name="Tautz D."/>
            <person name="Nigro L."/>
        </authorList>
    </citation>
    <scope>HOMOLOGY</scope>
</reference>
<reference key="3">
    <citation type="journal article" date="2007" name="Nature">
        <title>Evolution of genes and genomes on the Drosophila phylogeny.</title>
        <authorList>
            <consortium name="Drosophila 12 genomes consortium"/>
        </authorList>
    </citation>
    <scope>NUCLEOTIDE SEQUENCE [LARGE SCALE GENOMIC DNA]</scope>
    <source>
        <strain>Tucson 15010-1051.87</strain>
    </source>
</reference>
<accession>P13361</accession>
<accession>B4LZN5</accession>